<comment type="function">
    <text evidence="1 4">Cysteine protease that plays a key role in cytoplasm to vacuole transport (Cvt) and autophagy by mediating both proteolytic activation and delipidation of ATG8. Required for selective autophagic degradation of the nucleus (nucleophagy) as well as for mitophagy which contributes to regulate mitochondrial quantity and quality by eliminating the mitochondria to a basal level to fulfill cellular energy requirements and preventing excess ROS production. The protease activity is required for proteolytic activation of ATG8: cleaves the C-terminal amino acid of ATG8 to reveal a C-terminal glycine. ATG8 ubiquitin-like activity requires the exposure of the glycine at the C-terminus for its conjugation to phosphatidylethanolamine (PE) and its insertion to membranes, which is necessary for autophagy. The ATG8-PE conjugate mediates tethering between adjacent membranes and stimulates membrane hemifusion, leading to expansion of the autophagosomal membrane during autophagy. In addition to the protease activity, also catalyzes deconjugation of PE-conjugated forms of ATG8 during macroautophagy: ATG8 delipidation is required to release the protein from membranes, which facilitates multiple events during macroautophagy, and especially for efficient autophagosome biogenesis, the assembly of ATG9-containing tubulovesicular clusters into phagophores/autophagosomes, and for the disassembly of PAS-associated ATG components. ATG8 delipidation by ATG4 also recycles ATG8-PE generated on inappropriate membranes to maintain a reservoir of unlipidated ATG8 that is required for autophagosome formation at the PAS (By similarity). Autophagy is required for proper vegetative growth, asexual/sexual reproduction, and full virulence (PubMed:28894236). Autophagy is particularly involved in the biosynthesis of deoxynivalenol (DON), an important virulence determinant (PubMed:28894236).</text>
</comment>
<comment type="catalytic activity">
    <reaction evidence="1">
        <text>[protein]-C-terminal L-amino acid-glycyl-phosphatidylethanolamide + H2O = [protein]-C-terminal L-amino acid-glycine + a 1,2-diacyl-sn-glycero-3-phosphoethanolamine</text>
        <dbReference type="Rhea" id="RHEA:67548"/>
        <dbReference type="Rhea" id="RHEA-COMP:17323"/>
        <dbReference type="Rhea" id="RHEA-COMP:17324"/>
        <dbReference type="ChEBI" id="CHEBI:15377"/>
        <dbReference type="ChEBI" id="CHEBI:64612"/>
        <dbReference type="ChEBI" id="CHEBI:172940"/>
        <dbReference type="ChEBI" id="CHEBI:172941"/>
    </reaction>
    <physiologicalReaction direction="left-to-right" evidence="1">
        <dbReference type="Rhea" id="RHEA:67549"/>
    </physiologicalReaction>
</comment>
<comment type="subunit">
    <text evidence="1">Interacts with ATG8 (By similarity).</text>
</comment>
<comment type="subcellular location">
    <subcellularLocation>
        <location evidence="1">Cytoplasm</location>
    </subcellularLocation>
    <subcellularLocation>
        <location evidence="1">Nucleus</location>
    </subcellularLocation>
    <subcellularLocation>
        <location evidence="1">Preautophagosomal structure</location>
    </subcellularLocation>
</comment>
<comment type="disruption phenotype">
    <text evidence="4">Significantly decreases the radial growth of colonies under nutrient-rich conditions (PubMed:28894236). Reduces strongly the production of deoxynivalenol (DON), an important virulence determinant (PubMed:28894236).</text>
</comment>
<comment type="similarity">
    <text evidence="6">Belongs to the peptidase C54 family.</text>
</comment>
<comment type="sequence caution" evidence="6">
    <conflict type="erroneous gene model prediction">
        <sequence resource="EMBL-CDS" id="SCB65352"/>
    </conflict>
</comment>
<gene>
    <name evidence="5" type="primary">ATG4</name>
    <name type="ORF">FGRAMPH1_01T26115</name>
</gene>
<reference key="1">
    <citation type="journal article" date="2007" name="Science">
        <title>The Fusarium graminearum genome reveals a link between localized polymorphism and pathogen specialization.</title>
        <authorList>
            <person name="Cuomo C.A."/>
            <person name="Gueldener U."/>
            <person name="Xu J.-R."/>
            <person name="Trail F."/>
            <person name="Turgeon B.G."/>
            <person name="Di Pietro A."/>
            <person name="Walton J.D."/>
            <person name="Ma L.-J."/>
            <person name="Baker S.E."/>
            <person name="Rep M."/>
            <person name="Adam G."/>
            <person name="Antoniw J."/>
            <person name="Baldwin T."/>
            <person name="Calvo S.E."/>
            <person name="Chang Y.-L."/>
            <person name="DeCaprio D."/>
            <person name="Gale L.R."/>
            <person name="Gnerre S."/>
            <person name="Goswami R.S."/>
            <person name="Hammond-Kosack K."/>
            <person name="Harris L.J."/>
            <person name="Hilburn K."/>
            <person name="Kennell J.C."/>
            <person name="Kroken S."/>
            <person name="Magnuson J.K."/>
            <person name="Mannhaupt G."/>
            <person name="Mauceli E.W."/>
            <person name="Mewes H.-W."/>
            <person name="Mitterbauer R."/>
            <person name="Muehlbauer G."/>
            <person name="Muensterkoetter M."/>
            <person name="Nelson D."/>
            <person name="O'Donnell K."/>
            <person name="Ouellet T."/>
            <person name="Qi W."/>
            <person name="Quesneville H."/>
            <person name="Roncero M.I.G."/>
            <person name="Seong K.-Y."/>
            <person name="Tetko I.V."/>
            <person name="Urban M."/>
            <person name="Waalwijk C."/>
            <person name="Ward T.J."/>
            <person name="Yao J."/>
            <person name="Birren B.W."/>
            <person name="Kistler H.C."/>
        </authorList>
    </citation>
    <scope>NUCLEOTIDE SEQUENCE [LARGE SCALE GENOMIC DNA]</scope>
    <source>
        <strain>ATCC MYA-4620 / CBS 123657 / FGSC 9075 / NRRL 31084 / PH-1</strain>
    </source>
</reference>
<reference key="2">
    <citation type="journal article" date="2010" name="Nature">
        <title>Comparative genomics reveals mobile pathogenicity chromosomes in Fusarium.</title>
        <authorList>
            <person name="Ma L.-J."/>
            <person name="van der Does H.C."/>
            <person name="Borkovich K.A."/>
            <person name="Coleman J.J."/>
            <person name="Daboussi M.-J."/>
            <person name="Di Pietro A."/>
            <person name="Dufresne M."/>
            <person name="Freitag M."/>
            <person name="Grabherr M."/>
            <person name="Henrissat B."/>
            <person name="Houterman P.M."/>
            <person name="Kang S."/>
            <person name="Shim W.-B."/>
            <person name="Woloshuk C."/>
            <person name="Xie X."/>
            <person name="Xu J.-R."/>
            <person name="Antoniw J."/>
            <person name="Baker S.E."/>
            <person name="Bluhm B.H."/>
            <person name="Breakspear A."/>
            <person name="Brown D.W."/>
            <person name="Butchko R.A.E."/>
            <person name="Chapman S."/>
            <person name="Coulson R."/>
            <person name="Coutinho P.M."/>
            <person name="Danchin E.G.J."/>
            <person name="Diener A."/>
            <person name="Gale L.R."/>
            <person name="Gardiner D.M."/>
            <person name="Goff S."/>
            <person name="Hammond-Kosack K.E."/>
            <person name="Hilburn K."/>
            <person name="Hua-Van A."/>
            <person name="Jonkers W."/>
            <person name="Kazan K."/>
            <person name="Kodira C.D."/>
            <person name="Koehrsen M."/>
            <person name="Kumar L."/>
            <person name="Lee Y.-H."/>
            <person name="Li L."/>
            <person name="Manners J.M."/>
            <person name="Miranda-Saavedra D."/>
            <person name="Mukherjee M."/>
            <person name="Park G."/>
            <person name="Park J."/>
            <person name="Park S.-Y."/>
            <person name="Proctor R.H."/>
            <person name="Regev A."/>
            <person name="Ruiz-Roldan M.C."/>
            <person name="Sain D."/>
            <person name="Sakthikumar S."/>
            <person name="Sykes S."/>
            <person name="Schwartz D.C."/>
            <person name="Turgeon B.G."/>
            <person name="Wapinski I."/>
            <person name="Yoder O."/>
            <person name="Young S."/>
            <person name="Zeng Q."/>
            <person name="Zhou S."/>
            <person name="Galagan J."/>
            <person name="Cuomo C.A."/>
            <person name="Kistler H.C."/>
            <person name="Rep M."/>
        </authorList>
    </citation>
    <scope>GENOME REANNOTATION</scope>
    <source>
        <strain>ATCC MYA-4620 / CBS 123657 / FGSC 9075 / NRRL 31084 / PH-1</strain>
    </source>
</reference>
<reference key="3">
    <citation type="journal article" date="2015" name="BMC Genomics">
        <title>The completed genome sequence of the pathogenic ascomycete fungus Fusarium graminearum.</title>
        <authorList>
            <person name="King R."/>
            <person name="Urban M."/>
            <person name="Hammond-Kosack M.C.U."/>
            <person name="Hassani-Pak K."/>
            <person name="Hammond-Kosack K.E."/>
        </authorList>
    </citation>
    <scope>NUCLEOTIDE SEQUENCE [LARGE SCALE GENOMIC DNA]</scope>
    <source>
        <strain>ATCC MYA-4620 / CBS 123657 / FGSC 9075 / NRRL 31084 / PH-1</strain>
    </source>
</reference>
<reference key="4">
    <citation type="journal article" date="2017" name="Sci. Rep.">
        <title>Genome-wide functional analysis reveals that autophagy is necessary for growth, sporulation, deoxynivalenol production and virulence in Fusarium graminearum.</title>
        <authorList>
            <person name="Lv W."/>
            <person name="Wang C."/>
            <person name="Yang N."/>
            <person name="Que Y."/>
            <person name="Talbot N.J."/>
            <person name="Wang Z."/>
        </authorList>
    </citation>
    <scope>IDENTIFICATION</scope>
    <scope>FUNCTION</scope>
    <scope>DISRUPTION PHENOTYPE</scope>
</reference>
<sequence>MERAMANVDLGPYRRIVQIFWDPEPTNDVVHDQPVWCLGRSYRLNGKKNIKADDHHPQTPPSVLKAETETQEAHDTAQPPNPPTNAPDTPPDSISSSFSSSLAYDDPVVDGGWPSGFISDFESKIWMTYRSEFEPIPRSTNPQATSALSLSMRLKSQLGDQSPFSSDSGWGCMIRSGQSMLANTIAMVRLGRGDWRRGESVEEECRLLKDFADDPRAPYSIHSFVRHGASACGKYPGEWFGPSATARCIQALTNSHESSIRVYSTGDGPDVYEDEFMQIAKPPGEDFHPTLVLVGTRLGIDKITPVYWEALIAALQMPQSESQGKYYQYITRTFSALTIRSGRPSSSHYFIGAQGSFLFYLDPHHTRVALPYHEDPIEYTSEEIASCHTPRLRRIHVREMDPSMLIGFLIQNEVDWQELKRNVKHVQGKSIIHITDRNAVLGGSSEGRESAIDEVETLSDDDTDTIHEA</sequence>
<protein>
    <recommendedName>
        <fullName evidence="1">Cysteine protease ATG4</fullName>
        <ecNumber evidence="1">3.4.22.-</ecNumber>
    </recommendedName>
    <alternativeName>
        <fullName evidence="5">Autophagy-related protein 4</fullName>
    </alternativeName>
</protein>
<name>ATG4_GIBZE</name>
<dbReference type="EC" id="3.4.22.-" evidence="1"/>
<dbReference type="EMBL" id="HG970335">
    <property type="protein sequence ID" value="SCB65352.1"/>
    <property type="status" value="ALT_SEQ"/>
    <property type="molecule type" value="Genomic_DNA"/>
</dbReference>
<dbReference type="SMR" id="A0A098DRK7"/>
<dbReference type="FunCoup" id="A0A098DRK7">
    <property type="interactions" value="309"/>
</dbReference>
<dbReference type="STRING" id="229533.A0A098DRK7"/>
<dbReference type="InParanoid" id="A0A098DRK7"/>
<dbReference type="Proteomes" id="UP000070720">
    <property type="component" value="Chromosome 4"/>
</dbReference>
<dbReference type="GO" id="GO:0005634">
    <property type="term" value="C:nucleus"/>
    <property type="evidence" value="ECO:0007669"/>
    <property type="project" value="UniProtKB-SubCell"/>
</dbReference>
<dbReference type="GO" id="GO:0000407">
    <property type="term" value="C:phagophore assembly site"/>
    <property type="evidence" value="ECO:0007669"/>
    <property type="project" value="UniProtKB-SubCell"/>
</dbReference>
<dbReference type="GO" id="GO:0004197">
    <property type="term" value="F:cysteine-type endopeptidase activity"/>
    <property type="evidence" value="ECO:0007669"/>
    <property type="project" value="TreeGrafter"/>
</dbReference>
<dbReference type="GO" id="GO:0019786">
    <property type="term" value="F:protein-phosphatidylethanolamide deconjugating activity"/>
    <property type="evidence" value="ECO:0007669"/>
    <property type="project" value="InterPro"/>
</dbReference>
<dbReference type="GO" id="GO:0035973">
    <property type="term" value="P:aggrephagy"/>
    <property type="evidence" value="ECO:0007669"/>
    <property type="project" value="TreeGrafter"/>
</dbReference>
<dbReference type="GO" id="GO:0000045">
    <property type="term" value="P:autophagosome assembly"/>
    <property type="evidence" value="ECO:0007669"/>
    <property type="project" value="TreeGrafter"/>
</dbReference>
<dbReference type="GO" id="GO:0000423">
    <property type="term" value="P:mitophagy"/>
    <property type="evidence" value="ECO:0007669"/>
    <property type="project" value="TreeGrafter"/>
</dbReference>
<dbReference type="GO" id="GO:0034727">
    <property type="term" value="P:piecemeal microautophagy of the nucleus"/>
    <property type="evidence" value="ECO:0007669"/>
    <property type="project" value="TreeGrafter"/>
</dbReference>
<dbReference type="GO" id="GO:0016485">
    <property type="term" value="P:protein processing"/>
    <property type="evidence" value="ECO:0007669"/>
    <property type="project" value="TreeGrafter"/>
</dbReference>
<dbReference type="GO" id="GO:0015031">
    <property type="term" value="P:protein transport"/>
    <property type="evidence" value="ECO:0007669"/>
    <property type="project" value="UniProtKB-KW"/>
</dbReference>
<dbReference type="InterPro" id="IPR038765">
    <property type="entry name" value="Papain-like_cys_pep_sf"/>
</dbReference>
<dbReference type="InterPro" id="IPR005078">
    <property type="entry name" value="Peptidase_C54"/>
</dbReference>
<dbReference type="InterPro" id="IPR046792">
    <property type="entry name" value="Peptidase_C54_cat"/>
</dbReference>
<dbReference type="PANTHER" id="PTHR22624:SF49">
    <property type="entry name" value="CYSTEINE PROTEASE"/>
    <property type="match status" value="1"/>
</dbReference>
<dbReference type="PANTHER" id="PTHR22624">
    <property type="entry name" value="CYSTEINE PROTEASE ATG4"/>
    <property type="match status" value="1"/>
</dbReference>
<dbReference type="Pfam" id="PF03416">
    <property type="entry name" value="Peptidase_C54"/>
    <property type="match status" value="1"/>
</dbReference>
<dbReference type="SUPFAM" id="SSF54001">
    <property type="entry name" value="Cysteine proteinases"/>
    <property type="match status" value="1"/>
</dbReference>
<organism>
    <name type="scientific">Gibberella zeae (strain ATCC MYA-4620 / CBS 123657 / FGSC 9075 / NRRL 31084 / PH-1)</name>
    <name type="common">Wheat head blight fungus</name>
    <name type="synonym">Fusarium graminearum</name>
    <dbReference type="NCBI Taxonomy" id="229533"/>
    <lineage>
        <taxon>Eukaryota</taxon>
        <taxon>Fungi</taxon>
        <taxon>Dikarya</taxon>
        <taxon>Ascomycota</taxon>
        <taxon>Pezizomycotina</taxon>
        <taxon>Sordariomycetes</taxon>
        <taxon>Hypocreomycetidae</taxon>
        <taxon>Hypocreales</taxon>
        <taxon>Nectriaceae</taxon>
        <taxon>Fusarium</taxon>
    </lineage>
</organism>
<proteinExistence type="inferred from homology"/>
<evidence type="ECO:0000250" key="1">
    <source>
        <dbReference type="UniProtKB" id="P53867"/>
    </source>
</evidence>
<evidence type="ECO:0000250" key="2">
    <source>
        <dbReference type="UniProtKB" id="Q9Y4P1"/>
    </source>
</evidence>
<evidence type="ECO:0000256" key="3">
    <source>
        <dbReference type="SAM" id="MobiDB-lite"/>
    </source>
</evidence>
<evidence type="ECO:0000269" key="4">
    <source>
    </source>
</evidence>
<evidence type="ECO:0000303" key="5">
    <source>
    </source>
</evidence>
<evidence type="ECO:0000305" key="6"/>
<keyword id="KW-0072">Autophagy</keyword>
<keyword id="KW-0963">Cytoplasm</keyword>
<keyword id="KW-0378">Hydrolase</keyword>
<keyword id="KW-0539">Nucleus</keyword>
<keyword id="KW-0645">Protease</keyword>
<keyword id="KW-0653">Protein transport</keyword>
<keyword id="KW-1185">Reference proteome</keyword>
<keyword id="KW-0788">Thiol protease</keyword>
<keyword id="KW-0813">Transport</keyword>
<accession>A0A098DRK7</accession>
<accession>A0A0E0SDH2</accession>
<accession>A0A1C3YLC4</accession>
<feature type="chain" id="PRO_0000443873" description="Cysteine protease ATG4">
    <location>
        <begin position="1"/>
        <end position="469"/>
    </location>
</feature>
<feature type="region of interest" description="Disordered" evidence="3">
    <location>
        <begin position="48"/>
        <end position="99"/>
    </location>
</feature>
<feature type="region of interest" description="Disordered" evidence="3">
    <location>
        <begin position="443"/>
        <end position="469"/>
    </location>
</feature>
<feature type="compositionally biased region" description="Basic and acidic residues" evidence="3">
    <location>
        <begin position="66"/>
        <end position="75"/>
    </location>
</feature>
<feature type="compositionally biased region" description="Pro residues" evidence="3">
    <location>
        <begin position="79"/>
        <end position="90"/>
    </location>
</feature>
<feature type="compositionally biased region" description="Acidic residues" evidence="3">
    <location>
        <begin position="452"/>
        <end position="463"/>
    </location>
</feature>
<feature type="active site" description="Nucleophile" evidence="2">
    <location>
        <position position="172"/>
    </location>
</feature>
<feature type="active site" evidence="2">
    <location>
        <position position="362"/>
    </location>
</feature>
<feature type="active site" evidence="2">
    <location>
        <position position="364"/>
    </location>
</feature>